<keyword id="KW-0408">Iron</keyword>
<keyword id="KW-0411">Iron-sulfur</keyword>
<keyword id="KW-0479">Metal-binding</keyword>
<keyword id="KW-1185">Reference proteome</keyword>
<dbReference type="EMBL" id="BX640420">
    <property type="protein sequence ID" value="CAE43230.1"/>
    <property type="molecule type" value="Genomic_DNA"/>
</dbReference>
<dbReference type="RefSeq" id="NP_881537.1">
    <property type="nucleotide sequence ID" value="NC_002929.2"/>
</dbReference>
<dbReference type="RefSeq" id="WP_003814883.1">
    <property type="nucleotide sequence ID" value="NZ_CP039022.1"/>
</dbReference>
<dbReference type="SMR" id="Q7VUW2"/>
<dbReference type="STRING" id="257313.BP2958"/>
<dbReference type="PaxDb" id="257313-BP2958"/>
<dbReference type="GeneID" id="93205680"/>
<dbReference type="KEGG" id="bpe:BP2958"/>
<dbReference type="PATRIC" id="fig|257313.5.peg.3200"/>
<dbReference type="eggNOG" id="COG0316">
    <property type="taxonomic scope" value="Bacteria"/>
</dbReference>
<dbReference type="HOGENOM" id="CLU_069054_5_3_4"/>
<dbReference type="Proteomes" id="UP000002676">
    <property type="component" value="Chromosome"/>
</dbReference>
<dbReference type="GO" id="GO:0051537">
    <property type="term" value="F:2 iron, 2 sulfur cluster binding"/>
    <property type="evidence" value="ECO:0007669"/>
    <property type="project" value="UniProtKB-ARBA"/>
</dbReference>
<dbReference type="GO" id="GO:0051539">
    <property type="term" value="F:4 iron, 4 sulfur cluster binding"/>
    <property type="evidence" value="ECO:0007669"/>
    <property type="project" value="TreeGrafter"/>
</dbReference>
<dbReference type="GO" id="GO:0005506">
    <property type="term" value="F:iron ion binding"/>
    <property type="evidence" value="ECO:0007669"/>
    <property type="project" value="UniProtKB-UniRule"/>
</dbReference>
<dbReference type="GO" id="GO:0016226">
    <property type="term" value="P:iron-sulfur cluster assembly"/>
    <property type="evidence" value="ECO:0007669"/>
    <property type="project" value="UniProtKB-UniRule"/>
</dbReference>
<dbReference type="FunFam" id="2.60.300.12:FF:000002">
    <property type="entry name" value="Iron-sulfur cluster insertion protein ErpA"/>
    <property type="match status" value="1"/>
</dbReference>
<dbReference type="Gene3D" id="2.60.300.12">
    <property type="entry name" value="HesB-like domain"/>
    <property type="match status" value="1"/>
</dbReference>
<dbReference type="HAMAP" id="MF_01380">
    <property type="entry name" value="Fe_S_insert_ErpA"/>
    <property type="match status" value="1"/>
</dbReference>
<dbReference type="InterPro" id="IPR000361">
    <property type="entry name" value="FeS_biogenesis"/>
</dbReference>
<dbReference type="InterPro" id="IPR016092">
    <property type="entry name" value="FeS_cluster_insertion"/>
</dbReference>
<dbReference type="InterPro" id="IPR017870">
    <property type="entry name" value="FeS_cluster_insertion_CS"/>
</dbReference>
<dbReference type="InterPro" id="IPR023063">
    <property type="entry name" value="FeS_cluster_insertion_RrpA"/>
</dbReference>
<dbReference type="InterPro" id="IPR035903">
    <property type="entry name" value="HesB-like_dom_sf"/>
</dbReference>
<dbReference type="NCBIfam" id="TIGR00049">
    <property type="entry name" value="iron-sulfur cluster assembly accessory protein"/>
    <property type="match status" value="1"/>
</dbReference>
<dbReference type="NCBIfam" id="NF010147">
    <property type="entry name" value="PRK13623.1"/>
    <property type="match status" value="1"/>
</dbReference>
<dbReference type="PANTHER" id="PTHR43011">
    <property type="entry name" value="IRON-SULFUR CLUSTER ASSEMBLY 2 HOMOLOG, MITOCHONDRIAL"/>
    <property type="match status" value="1"/>
</dbReference>
<dbReference type="PANTHER" id="PTHR43011:SF1">
    <property type="entry name" value="IRON-SULFUR CLUSTER ASSEMBLY 2 HOMOLOG, MITOCHONDRIAL"/>
    <property type="match status" value="1"/>
</dbReference>
<dbReference type="Pfam" id="PF01521">
    <property type="entry name" value="Fe-S_biosyn"/>
    <property type="match status" value="1"/>
</dbReference>
<dbReference type="SUPFAM" id="SSF89360">
    <property type="entry name" value="HesB-like domain"/>
    <property type="match status" value="1"/>
</dbReference>
<dbReference type="PROSITE" id="PS01152">
    <property type="entry name" value="HESB"/>
    <property type="match status" value="1"/>
</dbReference>
<protein>
    <recommendedName>
        <fullName evidence="1">Putative iron-sulfur cluster insertion protein ErpA</fullName>
    </recommendedName>
</protein>
<accession>Q7VUW2</accession>
<name>ERPA_BORPE</name>
<sequence length="123" mass="13142">MNAVTETVDLQAPPPVPLVFTDSAAAKVKDLLAEEGNPELKLRVFVQGGGCSGFQYGFTFDEVVNDDDTVLDKAGVQLLVDPMSFQYLVGAEIDYKEDLEGAQFVIRNPNASTTCGCGSSFSV</sequence>
<evidence type="ECO:0000255" key="1">
    <source>
        <dbReference type="HAMAP-Rule" id="MF_01380"/>
    </source>
</evidence>
<comment type="function">
    <text evidence="1">Required for insertion of 4Fe-4S clusters.</text>
</comment>
<comment type="cofactor">
    <cofactor evidence="1">
        <name>iron-sulfur cluster</name>
        <dbReference type="ChEBI" id="CHEBI:30408"/>
    </cofactor>
    <text evidence="1">Binds 1 iron-sulfur cluster per subunit.</text>
</comment>
<comment type="subunit">
    <text evidence="1">Homodimer.</text>
</comment>
<comment type="similarity">
    <text evidence="1">Belongs to the HesB/IscA family.</text>
</comment>
<feature type="chain" id="PRO_0000311452" description="Putative iron-sulfur cluster insertion protein ErpA">
    <location>
        <begin position="1"/>
        <end position="123"/>
    </location>
</feature>
<feature type="binding site" evidence="1">
    <location>
        <position position="51"/>
    </location>
    <ligand>
        <name>iron-sulfur cluster</name>
        <dbReference type="ChEBI" id="CHEBI:30408"/>
    </ligand>
</feature>
<feature type="binding site" evidence="1">
    <location>
        <position position="115"/>
    </location>
    <ligand>
        <name>iron-sulfur cluster</name>
        <dbReference type="ChEBI" id="CHEBI:30408"/>
    </ligand>
</feature>
<feature type="binding site" evidence="1">
    <location>
        <position position="117"/>
    </location>
    <ligand>
        <name>iron-sulfur cluster</name>
        <dbReference type="ChEBI" id="CHEBI:30408"/>
    </ligand>
</feature>
<gene>
    <name evidence="1" type="primary">erpA</name>
    <name type="ordered locus">BP2958</name>
</gene>
<reference key="1">
    <citation type="journal article" date="2003" name="Nat. Genet.">
        <title>Comparative analysis of the genome sequences of Bordetella pertussis, Bordetella parapertussis and Bordetella bronchiseptica.</title>
        <authorList>
            <person name="Parkhill J."/>
            <person name="Sebaihia M."/>
            <person name="Preston A."/>
            <person name="Murphy L.D."/>
            <person name="Thomson N.R."/>
            <person name="Harris D.E."/>
            <person name="Holden M.T.G."/>
            <person name="Churcher C.M."/>
            <person name="Bentley S.D."/>
            <person name="Mungall K.L."/>
            <person name="Cerdeno-Tarraga A.-M."/>
            <person name="Temple L."/>
            <person name="James K.D."/>
            <person name="Harris B."/>
            <person name="Quail M.A."/>
            <person name="Achtman M."/>
            <person name="Atkin R."/>
            <person name="Baker S."/>
            <person name="Basham D."/>
            <person name="Bason N."/>
            <person name="Cherevach I."/>
            <person name="Chillingworth T."/>
            <person name="Collins M."/>
            <person name="Cronin A."/>
            <person name="Davis P."/>
            <person name="Doggett J."/>
            <person name="Feltwell T."/>
            <person name="Goble A."/>
            <person name="Hamlin N."/>
            <person name="Hauser H."/>
            <person name="Holroyd S."/>
            <person name="Jagels K."/>
            <person name="Leather S."/>
            <person name="Moule S."/>
            <person name="Norberczak H."/>
            <person name="O'Neil S."/>
            <person name="Ormond D."/>
            <person name="Price C."/>
            <person name="Rabbinowitsch E."/>
            <person name="Rutter S."/>
            <person name="Sanders M."/>
            <person name="Saunders D."/>
            <person name="Seeger K."/>
            <person name="Sharp S."/>
            <person name="Simmonds M."/>
            <person name="Skelton J."/>
            <person name="Squares R."/>
            <person name="Squares S."/>
            <person name="Stevens K."/>
            <person name="Unwin L."/>
            <person name="Whitehead S."/>
            <person name="Barrell B.G."/>
            <person name="Maskell D.J."/>
        </authorList>
    </citation>
    <scope>NUCLEOTIDE SEQUENCE [LARGE SCALE GENOMIC DNA]</scope>
    <source>
        <strain>Tohama I / ATCC BAA-589 / NCTC 13251</strain>
    </source>
</reference>
<proteinExistence type="inferred from homology"/>
<organism>
    <name type="scientific">Bordetella pertussis (strain Tohama I / ATCC BAA-589 / NCTC 13251)</name>
    <dbReference type="NCBI Taxonomy" id="257313"/>
    <lineage>
        <taxon>Bacteria</taxon>
        <taxon>Pseudomonadati</taxon>
        <taxon>Pseudomonadota</taxon>
        <taxon>Betaproteobacteria</taxon>
        <taxon>Burkholderiales</taxon>
        <taxon>Alcaligenaceae</taxon>
        <taxon>Bordetella</taxon>
    </lineage>
</organism>